<keyword id="KW-0002">3D-structure</keyword>
<keyword id="KW-0903">Direct protein sequencing</keyword>
<keyword id="KW-0560">Oxidoreductase</keyword>
<keyword id="KW-1185">Reference proteome</keyword>
<proteinExistence type="evidence at protein level"/>
<sequence>MPVAKKYFEIRWHGRAGQGAKSASQMLAEAALEAGKYVQAFPEYGAERTGAPMRAFNRIGDEYIRVRSAVENPDVVVVIDETLLSPAIVEGLSEDGILLVNTVKDFEFVRKKTGFNGKICVVDATDIALQEIKRGIPNTPMLGALVRVTGIVPLEAIEKRIEKMFGKKFPQEVIDANKRALRRGYEEVKCSE</sequence>
<comment type="catalytic activity">
    <reaction>
        <text>2 oxidized [2Fe-2S]-[ferredoxin] + pyruvate + CoA = 2 reduced [2Fe-2S]-[ferredoxin] + acetyl-CoA + CO2 + H(+)</text>
        <dbReference type="Rhea" id="RHEA:12765"/>
        <dbReference type="Rhea" id="RHEA-COMP:10000"/>
        <dbReference type="Rhea" id="RHEA-COMP:10001"/>
        <dbReference type="ChEBI" id="CHEBI:15361"/>
        <dbReference type="ChEBI" id="CHEBI:15378"/>
        <dbReference type="ChEBI" id="CHEBI:16526"/>
        <dbReference type="ChEBI" id="CHEBI:33737"/>
        <dbReference type="ChEBI" id="CHEBI:33738"/>
        <dbReference type="ChEBI" id="CHEBI:57287"/>
        <dbReference type="ChEBI" id="CHEBI:57288"/>
        <dbReference type="EC" id="1.2.7.1"/>
    </reaction>
</comment>
<comment type="subunit">
    <text>Heterotetramer of one alpha, one beta, one delta and one gamma chain.</text>
</comment>
<comment type="sequence caution" evidence="2">
    <conflict type="erroneous initiation">
        <sequence resource="EMBL-CDS" id="AAD35109"/>
    </conflict>
</comment>
<comment type="sequence caution" evidence="2">
    <conflict type="erroneous initiation">
        <sequence resource="EMBL-CDS" id="CAA59455"/>
    </conflict>
</comment>
<protein>
    <recommendedName>
        <fullName>Pyruvate synthase subunit PorC</fullName>
        <ecNumber>1.2.7.1</ecNumber>
    </recommendedName>
    <alternativeName>
        <fullName>Pyruvate oxidoreductase gamma chain</fullName>
        <shortName>POR</shortName>
    </alternativeName>
    <alternativeName>
        <fullName>Pyruvic-ferredoxin oxidoreductase subunit gamma</fullName>
    </alternativeName>
</protein>
<feature type="initiator methionine" description="Removed" evidence="1">
    <location>
        <position position="1"/>
    </location>
</feature>
<feature type="chain" id="PRO_0000099917" description="Pyruvate synthase subunit PorC">
    <location>
        <begin position="2"/>
        <end position="192"/>
    </location>
</feature>
<feature type="sequence conflict" description="In Ref. 1; CAA59455." evidence="2" ref="1">
    <original>A</original>
    <variation>V</variation>
    <location>
        <position position="23"/>
    </location>
</feature>
<feature type="strand" evidence="3">
    <location>
        <begin position="7"/>
        <end position="15"/>
    </location>
</feature>
<feature type="helix" evidence="3">
    <location>
        <begin position="20"/>
        <end position="33"/>
    </location>
</feature>
<feature type="strand" evidence="3">
    <location>
        <begin position="38"/>
        <end position="43"/>
    </location>
</feature>
<feature type="strand" evidence="3">
    <location>
        <begin position="52"/>
        <end position="60"/>
    </location>
</feature>
<feature type="strand" evidence="3">
    <location>
        <begin position="74"/>
        <end position="80"/>
    </location>
</feature>
<feature type="helix" evidence="3">
    <location>
        <begin position="81"/>
        <end position="83"/>
    </location>
</feature>
<feature type="helix" evidence="3">
    <location>
        <begin position="86"/>
        <end position="89"/>
    </location>
</feature>
<feature type="strand" evidence="3">
    <location>
        <begin position="96"/>
        <end position="101"/>
    </location>
</feature>
<feature type="helix" evidence="3">
    <location>
        <begin position="106"/>
        <end position="113"/>
    </location>
</feature>
<feature type="strand" evidence="3">
    <location>
        <begin position="117"/>
        <end position="122"/>
    </location>
</feature>
<feature type="helix" evidence="3">
    <location>
        <begin position="124"/>
        <end position="131"/>
    </location>
</feature>
<feature type="strand" evidence="3">
    <location>
        <begin position="132"/>
        <end position="134"/>
    </location>
</feature>
<feature type="helix" evidence="3">
    <location>
        <begin position="138"/>
        <end position="149"/>
    </location>
</feature>
<feature type="helix" evidence="3">
    <location>
        <begin position="154"/>
        <end position="164"/>
    </location>
</feature>
<feature type="helix" evidence="3">
    <location>
        <begin position="171"/>
        <end position="187"/>
    </location>
</feature>
<gene>
    <name type="primary">porC</name>
    <name type="synonym">porG</name>
    <name type="ordered locus">TM_0015</name>
</gene>
<name>PORC_THEMA</name>
<accession>O05650</accession>
<organism>
    <name type="scientific">Thermotoga maritima (strain ATCC 43589 / DSM 3109 / JCM 10099 / NBRC 100826 / MSB8)</name>
    <dbReference type="NCBI Taxonomy" id="243274"/>
    <lineage>
        <taxon>Bacteria</taxon>
        <taxon>Thermotogati</taxon>
        <taxon>Thermotogota</taxon>
        <taxon>Thermotogae</taxon>
        <taxon>Thermotogales</taxon>
        <taxon>Thermotogaceae</taxon>
        <taxon>Thermotoga</taxon>
    </lineage>
</organism>
<reference key="1">
    <citation type="journal article" date="1996" name="J. Bacteriol.">
        <title>Molecular and phylogenetic characterization of pyruvate and 2-ketoisovalerate ferredoxin oxidoreductases from Pyrococcus furiosus and pyruvate ferredoxin oxidoreductase from Thermotoga maritima.</title>
        <authorList>
            <person name="Kletzin A."/>
            <person name="Adams M.W.W."/>
        </authorList>
    </citation>
    <scope>NUCLEOTIDE SEQUENCE [GENOMIC DNA]</scope>
    <scope>PROTEIN SEQUENCE OF 2-20</scope>
    <source>
        <strain>ATCC 43589 / DSM 3109 / JCM 10099 / NBRC 100826 / MSB8</strain>
    </source>
</reference>
<reference key="2">
    <citation type="journal article" date="1999" name="Nature">
        <title>Evidence for lateral gene transfer between Archaea and Bacteria from genome sequence of Thermotoga maritima.</title>
        <authorList>
            <person name="Nelson K.E."/>
            <person name="Clayton R.A."/>
            <person name="Gill S.R."/>
            <person name="Gwinn M.L."/>
            <person name="Dodson R.J."/>
            <person name="Haft D.H."/>
            <person name="Hickey E.K."/>
            <person name="Peterson J.D."/>
            <person name="Nelson W.C."/>
            <person name="Ketchum K.A."/>
            <person name="McDonald L.A."/>
            <person name="Utterback T.R."/>
            <person name="Malek J.A."/>
            <person name="Linher K.D."/>
            <person name="Garrett M.M."/>
            <person name="Stewart A.M."/>
            <person name="Cotton M.D."/>
            <person name="Pratt M.S."/>
            <person name="Phillips C.A."/>
            <person name="Richardson D.L."/>
            <person name="Heidelberg J.F."/>
            <person name="Sutton G.G."/>
            <person name="Fleischmann R.D."/>
            <person name="Eisen J.A."/>
            <person name="White O."/>
            <person name="Salzberg S.L."/>
            <person name="Smith H.O."/>
            <person name="Venter J.C."/>
            <person name="Fraser C.M."/>
        </authorList>
    </citation>
    <scope>NUCLEOTIDE SEQUENCE [LARGE SCALE GENOMIC DNA]</scope>
    <source>
        <strain>ATCC 43589 / DSM 3109 / JCM 10099 / NBRC 100826 / MSB8</strain>
    </source>
</reference>
<evidence type="ECO:0000269" key="1">
    <source>
    </source>
</evidence>
<evidence type="ECO:0000305" key="2"/>
<evidence type="ECO:0007829" key="3">
    <source>
        <dbReference type="PDB" id="2RAA"/>
    </source>
</evidence>
<dbReference type="EC" id="1.2.7.1"/>
<dbReference type="EMBL" id="X85171">
    <property type="protein sequence ID" value="CAA59455.1"/>
    <property type="status" value="ALT_INIT"/>
    <property type="molecule type" value="Genomic_DNA"/>
</dbReference>
<dbReference type="EMBL" id="AE000512">
    <property type="protein sequence ID" value="AAD35109.1"/>
    <property type="status" value="ALT_INIT"/>
    <property type="molecule type" value="Genomic_DNA"/>
</dbReference>
<dbReference type="PIR" id="C59427">
    <property type="entry name" value="A72427"/>
</dbReference>
<dbReference type="RefSeq" id="NP_227831.1">
    <property type="nucleotide sequence ID" value="NC_000853.1"/>
</dbReference>
<dbReference type="RefSeq" id="WP_004082456.1">
    <property type="nucleotide sequence ID" value="NZ_CP011107.1"/>
</dbReference>
<dbReference type="PDB" id="2RAA">
    <property type="method" value="X-ray"/>
    <property type="resolution" value="2.12 A"/>
    <property type="chains" value="A=1-192"/>
</dbReference>
<dbReference type="PDBsum" id="2RAA"/>
<dbReference type="SMR" id="O05650"/>
<dbReference type="STRING" id="243274.TM_0015"/>
<dbReference type="PaxDb" id="243274-THEMA_04725"/>
<dbReference type="EnsemblBacteria" id="AAD35109">
    <property type="protein sequence ID" value="AAD35109"/>
    <property type="gene ID" value="TM_0015"/>
</dbReference>
<dbReference type="KEGG" id="tma:TM0015"/>
<dbReference type="KEGG" id="tmi:THEMA_04725"/>
<dbReference type="KEGG" id="tmm:Tmari_0012"/>
<dbReference type="KEGG" id="tmw:THMA_0011"/>
<dbReference type="eggNOG" id="COG1014">
    <property type="taxonomic scope" value="Bacteria"/>
</dbReference>
<dbReference type="InParanoid" id="O05650"/>
<dbReference type="OrthoDB" id="9794954at2"/>
<dbReference type="BioCyc" id="MetaCyc:MONOMER-425"/>
<dbReference type="BRENDA" id="1.2.7.1">
    <property type="organism ID" value="6331"/>
</dbReference>
<dbReference type="EvolutionaryTrace" id="O05650"/>
<dbReference type="Proteomes" id="UP000008183">
    <property type="component" value="Chromosome"/>
</dbReference>
<dbReference type="GO" id="GO:0019164">
    <property type="term" value="F:pyruvate synthase activity"/>
    <property type="evidence" value="ECO:0007669"/>
    <property type="project" value="UniProtKB-EC"/>
</dbReference>
<dbReference type="Gene3D" id="3.40.920.10">
    <property type="entry name" value="Pyruvate-ferredoxin oxidoreductase, PFOR, domain III"/>
    <property type="match status" value="1"/>
</dbReference>
<dbReference type="InterPro" id="IPR051626">
    <property type="entry name" value="Oxidoreductase_gamma_subunit"/>
</dbReference>
<dbReference type="InterPro" id="IPR011894">
    <property type="entry name" value="PorC_KorC"/>
</dbReference>
<dbReference type="InterPro" id="IPR053412">
    <property type="entry name" value="Pyruvate_synthase_PorC"/>
</dbReference>
<dbReference type="InterPro" id="IPR019752">
    <property type="entry name" value="Pyrv/ketoisovalerate_OxRed_cat"/>
</dbReference>
<dbReference type="InterPro" id="IPR002869">
    <property type="entry name" value="Pyrv_flavodox_OxRed_cen"/>
</dbReference>
<dbReference type="NCBIfam" id="TIGR02175">
    <property type="entry name" value="PorC_KorC"/>
    <property type="match status" value="1"/>
</dbReference>
<dbReference type="NCBIfam" id="NF040683">
    <property type="entry name" value="PorC_Meth_Thtga"/>
    <property type="match status" value="1"/>
</dbReference>
<dbReference type="PANTHER" id="PTHR43366">
    <property type="entry name" value="PYRUVATE SYNTHASE SUBUNIT PORC"/>
    <property type="match status" value="1"/>
</dbReference>
<dbReference type="PANTHER" id="PTHR43366:SF1">
    <property type="entry name" value="PYRUVATE SYNTHASE SUBUNIT PORC"/>
    <property type="match status" value="1"/>
</dbReference>
<dbReference type="Pfam" id="PF01558">
    <property type="entry name" value="POR"/>
    <property type="match status" value="1"/>
</dbReference>
<dbReference type="SUPFAM" id="SSF53323">
    <property type="entry name" value="Pyruvate-ferredoxin oxidoreductase, PFOR, domain III"/>
    <property type="match status" value="1"/>
</dbReference>